<keyword id="KW-0963">Cytoplasm</keyword>
<keyword id="KW-0664">Pyridoxine biosynthesis</keyword>
<keyword id="KW-1185">Reference proteome</keyword>
<keyword id="KW-0808">Transferase</keyword>
<evidence type="ECO:0000255" key="1">
    <source>
        <dbReference type="HAMAP-Rule" id="MF_00279"/>
    </source>
</evidence>
<evidence type="ECO:0000305" key="2"/>
<sequence length="246" mass="26608">MPHFIDLGVNVDHVATLRQARRGQEPDPITAASLAEQGGADGITFHLREDRRHISDRDVELFVQTVQVRTNFELACAADVLAICCRVQPDWALLVPESREEVTTEGGLDVAGDSGRIADAIQMLKDAGIATSLFLDPEPNQIEAAAKLQVDAVELHTGPYALARGAAVQHELRRLADTGKMIRDAGMRLHAGHGLNYVNVRPVAAIDGMAELNIGHSIVSRSVMVGMREAVAEMRRLLDSVTIAAQ</sequence>
<proteinExistence type="inferred from homology"/>
<comment type="function">
    <text evidence="1">Catalyzes the complicated ring closure reaction between the two acyclic compounds 1-deoxy-D-xylulose-5-phosphate (DXP) and 3-amino-2-oxopropyl phosphate (1-amino-acetone-3-phosphate or AAP) to form pyridoxine 5'-phosphate (PNP) and inorganic phosphate.</text>
</comment>
<comment type="catalytic activity">
    <reaction evidence="1">
        <text>3-amino-2-oxopropyl phosphate + 1-deoxy-D-xylulose 5-phosphate = pyridoxine 5'-phosphate + phosphate + 2 H2O + H(+)</text>
        <dbReference type="Rhea" id="RHEA:15265"/>
        <dbReference type="ChEBI" id="CHEBI:15377"/>
        <dbReference type="ChEBI" id="CHEBI:15378"/>
        <dbReference type="ChEBI" id="CHEBI:43474"/>
        <dbReference type="ChEBI" id="CHEBI:57279"/>
        <dbReference type="ChEBI" id="CHEBI:57792"/>
        <dbReference type="ChEBI" id="CHEBI:58589"/>
        <dbReference type="EC" id="2.6.99.2"/>
    </reaction>
</comment>
<comment type="pathway">
    <text evidence="1">Cofactor biosynthesis; pyridoxine 5'-phosphate biosynthesis; pyridoxine 5'-phosphate from D-erythrose 4-phosphate: step 5/5.</text>
</comment>
<comment type="subunit">
    <text evidence="1">Homooctamer; tetramer of dimers.</text>
</comment>
<comment type="subcellular location">
    <subcellularLocation>
        <location evidence="1">Cytoplasm</location>
    </subcellularLocation>
</comment>
<comment type="similarity">
    <text evidence="1">Belongs to the PNP synthase family.</text>
</comment>
<comment type="sequence caution" evidence="2">
    <conflict type="erroneous initiation">
        <sequence resource="EMBL-CDS" id="CAD71637"/>
    </conflict>
</comment>
<accession>Q7UYK5</accession>
<gene>
    <name evidence="1" type="primary">pdxJ</name>
    <name type="ordered locus">RB536</name>
</gene>
<reference key="1">
    <citation type="journal article" date="2003" name="Proc. Natl. Acad. Sci. U.S.A.">
        <title>Complete genome sequence of the marine planctomycete Pirellula sp. strain 1.</title>
        <authorList>
            <person name="Gloeckner F.O."/>
            <person name="Kube M."/>
            <person name="Bauer M."/>
            <person name="Teeling H."/>
            <person name="Lombardot T."/>
            <person name="Ludwig W."/>
            <person name="Gade D."/>
            <person name="Beck A."/>
            <person name="Borzym K."/>
            <person name="Heitmann K."/>
            <person name="Rabus R."/>
            <person name="Schlesner H."/>
            <person name="Amann R."/>
            <person name="Reinhardt R."/>
        </authorList>
    </citation>
    <scope>NUCLEOTIDE SEQUENCE [LARGE SCALE GENOMIC DNA]</scope>
    <source>
        <strain>DSM 10527 / NCIMB 13988 / SH1</strain>
    </source>
</reference>
<feature type="chain" id="PRO_0000226042" description="Pyridoxine 5'-phosphate synthase">
    <location>
        <begin position="1"/>
        <end position="246"/>
    </location>
</feature>
<feature type="active site" description="Proton acceptor" evidence="1">
    <location>
        <position position="46"/>
    </location>
</feature>
<feature type="active site" description="Proton acceptor" evidence="1">
    <location>
        <position position="73"/>
    </location>
</feature>
<feature type="active site" description="Proton donor" evidence="1">
    <location>
        <position position="193"/>
    </location>
</feature>
<feature type="binding site" evidence="1">
    <location>
        <position position="10"/>
    </location>
    <ligand>
        <name>3-amino-2-oxopropyl phosphate</name>
        <dbReference type="ChEBI" id="CHEBI:57279"/>
    </ligand>
</feature>
<feature type="binding site" evidence="1">
    <location>
        <begin position="12"/>
        <end position="13"/>
    </location>
    <ligand>
        <name>1-deoxy-D-xylulose 5-phosphate</name>
        <dbReference type="ChEBI" id="CHEBI:57792"/>
    </ligand>
</feature>
<feature type="binding site" evidence="1">
    <location>
        <position position="21"/>
    </location>
    <ligand>
        <name>3-amino-2-oxopropyl phosphate</name>
        <dbReference type="ChEBI" id="CHEBI:57279"/>
    </ligand>
</feature>
<feature type="binding site" evidence="1">
    <location>
        <position position="48"/>
    </location>
    <ligand>
        <name>1-deoxy-D-xylulose 5-phosphate</name>
        <dbReference type="ChEBI" id="CHEBI:57792"/>
    </ligand>
</feature>
<feature type="binding site" evidence="1">
    <location>
        <position position="53"/>
    </location>
    <ligand>
        <name>1-deoxy-D-xylulose 5-phosphate</name>
        <dbReference type="ChEBI" id="CHEBI:57792"/>
    </ligand>
</feature>
<feature type="binding site" evidence="1">
    <location>
        <position position="103"/>
    </location>
    <ligand>
        <name>1-deoxy-D-xylulose 5-phosphate</name>
        <dbReference type="ChEBI" id="CHEBI:57792"/>
    </ligand>
</feature>
<feature type="binding site" evidence="1">
    <location>
        <position position="194"/>
    </location>
    <ligand>
        <name>3-amino-2-oxopropyl phosphate</name>
        <dbReference type="ChEBI" id="CHEBI:57279"/>
    </ligand>
</feature>
<feature type="binding site" evidence="1">
    <location>
        <begin position="215"/>
        <end position="216"/>
    </location>
    <ligand>
        <name>3-amino-2-oxopropyl phosphate</name>
        <dbReference type="ChEBI" id="CHEBI:57279"/>
    </ligand>
</feature>
<feature type="site" description="Transition state stabilizer" evidence="1">
    <location>
        <position position="154"/>
    </location>
</feature>
<protein>
    <recommendedName>
        <fullName evidence="1">Pyridoxine 5'-phosphate synthase</fullName>
        <shortName evidence="1">PNP synthase</shortName>
        <ecNumber evidence="1">2.6.99.2</ecNumber>
    </recommendedName>
</protein>
<organism>
    <name type="scientific">Rhodopirellula baltica (strain DSM 10527 / NCIMB 13988 / SH1)</name>
    <dbReference type="NCBI Taxonomy" id="243090"/>
    <lineage>
        <taxon>Bacteria</taxon>
        <taxon>Pseudomonadati</taxon>
        <taxon>Planctomycetota</taxon>
        <taxon>Planctomycetia</taxon>
        <taxon>Pirellulales</taxon>
        <taxon>Pirellulaceae</taxon>
        <taxon>Rhodopirellula</taxon>
    </lineage>
</organism>
<name>PDXJ_RHOBA</name>
<dbReference type="EC" id="2.6.99.2" evidence="1"/>
<dbReference type="EMBL" id="BX294133">
    <property type="protein sequence ID" value="CAD71637.1"/>
    <property type="status" value="ALT_INIT"/>
    <property type="molecule type" value="Genomic_DNA"/>
</dbReference>
<dbReference type="RefSeq" id="NP_863963.1">
    <property type="nucleotide sequence ID" value="NC_005027.1"/>
</dbReference>
<dbReference type="RefSeq" id="WP_164922652.1">
    <property type="nucleotide sequence ID" value="NC_005027.1"/>
</dbReference>
<dbReference type="SMR" id="Q7UYK5"/>
<dbReference type="FunCoup" id="Q7UYK5">
    <property type="interactions" value="300"/>
</dbReference>
<dbReference type="STRING" id="243090.RB536"/>
<dbReference type="EnsemblBacteria" id="CAD71637">
    <property type="protein sequence ID" value="CAD71637"/>
    <property type="gene ID" value="RB536"/>
</dbReference>
<dbReference type="KEGG" id="rba:RB536"/>
<dbReference type="PATRIC" id="fig|243090.15.peg.267"/>
<dbReference type="eggNOG" id="COG0854">
    <property type="taxonomic scope" value="Bacteria"/>
</dbReference>
<dbReference type="HOGENOM" id="CLU_074563_0_0_0"/>
<dbReference type="InParanoid" id="Q7UYK5"/>
<dbReference type="OrthoDB" id="9806590at2"/>
<dbReference type="UniPathway" id="UPA00244">
    <property type="reaction ID" value="UER00313"/>
</dbReference>
<dbReference type="Proteomes" id="UP000001025">
    <property type="component" value="Chromosome"/>
</dbReference>
<dbReference type="GO" id="GO:0005829">
    <property type="term" value="C:cytosol"/>
    <property type="evidence" value="ECO:0000318"/>
    <property type="project" value="GO_Central"/>
</dbReference>
<dbReference type="GO" id="GO:0033856">
    <property type="term" value="F:pyridoxine 5'-phosphate synthase activity"/>
    <property type="evidence" value="ECO:0000318"/>
    <property type="project" value="GO_Central"/>
</dbReference>
<dbReference type="GO" id="GO:0008615">
    <property type="term" value="P:pyridoxine biosynthetic process"/>
    <property type="evidence" value="ECO:0000318"/>
    <property type="project" value="GO_Central"/>
</dbReference>
<dbReference type="CDD" id="cd00003">
    <property type="entry name" value="PNPsynthase"/>
    <property type="match status" value="1"/>
</dbReference>
<dbReference type="FunFam" id="3.20.20.70:FF:000264">
    <property type="entry name" value="Pyridoxine 5'-phosphate synthase"/>
    <property type="match status" value="1"/>
</dbReference>
<dbReference type="Gene3D" id="3.20.20.70">
    <property type="entry name" value="Aldolase class I"/>
    <property type="match status" value="1"/>
</dbReference>
<dbReference type="HAMAP" id="MF_00279">
    <property type="entry name" value="PdxJ"/>
    <property type="match status" value="1"/>
</dbReference>
<dbReference type="InterPro" id="IPR013785">
    <property type="entry name" value="Aldolase_TIM"/>
</dbReference>
<dbReference type="InterPro" id="IPR004569">
    <property type="entry name" value="PyrdxlP_synth_PdxJ"/>
</dbReference>
<dbReference type="InterPro" id="IPR036130">
    <property type="entry name" value="Pyridoxine-5'_phos_synth"/>
</dbReference>
<dbReference type="NCBIfam" id="TIGR00559">
    <property type="entry name" value="pdxJ"/>
    <property type="match status" value="1"/>
</dbReference>
<dbReference type="NCBIfam" id="NF003625">
    <property type="entry name" value="PRK05265.1-3"/>
    <property type="match status" value="1"/>
</dbReference>
<dbReference type="NCBIfam" id="NF003627">
    <property type="entry name" value="PRK05265.1-5"/>
    <property type="match status" value="1"/>
</dbReference>
<dbReference type="PANTHER" id="PTHR30456">
    <property type="entry name" value="PYRIDOXINE 5'-PHOSPHATE SYNTHASE"/>
    <property type="match status" value="1"/>
</dbReference>
<dbReference type="PANTHER" id="PTHR30456:SF0">
    <property type="entry name" value="PYRIDOXINE 5'-PHOSPHATE SYNTHASE"/>
    <property type="match status" value="1"/>
</dbReference>
<dbReference type="Pfam" id="PF03740">
    <property type="entry name" value="PdxJ"/>
    <property type="match status" value="1"/>
</dbReference>
<dbReference type="SUPFAM" id="SSF63892">
    <property type="entry name" value="Pyridoxine 5'-phosphate synthase"/>
    <property type="match status" value="1"/>
</dbReference>